<comment type="function">
    <text evidence="1 7 8 9 10 11 12 13 19">May play roles in mucosal defense system and cellular immune defense. May play a role in liver regeneration. May be an important factor in fate decision and differentiation of transit-amplifying ductular (oval) cells within the hepatic lineage. May function as a binding protein in saliva for the regulation of taste sensation. May play a role as an opsonin receptor for SFTPD and SPAR in macrophage tissues throughout the body, including epithelial cells lining the gastrointestinal tract (By similarity). Required for terminal differentiation of columnar epithelial cells during early embryogenesis. Displays a broad calcium-dependent binding spectrum against both Gram-positive and Gram-negative bacteria, suggesting a role in defense against bacterial pathogens. Binds to a range of poly-sulfated and poly-phosphorylated ligands which may explain its broad bacterial-binding specificity. Inhibits cytoinvasion of S.enterica. Associates with the actin cytoskeleton and is involved in its remodeling during regulated exocytosis. Interacts with pancreatic zymogens in a pH-dependent manner and may act as a Golgi cargo receptor in the regulated secretory pathway of the pancreatic acinar cell.</text>
</comment>
<comment type="subunit">
    <text evidence="1 9">Interacts with LGALS3. Binds SPAR in a calcium-dependent manner (By similarity). Binds SFTPD in a calcium-dependent manner.</text>
</comment>
<comment type="subcellular location">
    <subcellularLocation>
        <location>Secreted</location>
    </subcellularLocation>
    <subcellularLocation>
        <location>Cytoplasmic vesicle</location>
        <location>Secretory vesicle membrane</location>
        <topology>Single-pass membrane protein</topology>
        <orientation>Lumenal side</orientation>
    </subcellularLocation>
    <text>Localized to the lumenal aspect of crypt cells in the small intestine. In the colon, seen in the lumenal aspect of surface epithelial cells. Formed in the ducts of von Ebner gland and released into the fluid bathing the taste buds contained in the taste papillae. In the CFTR knockout mouse, enhanced on the acinar luminar surface.</text>
</comment>
<comment type="alternative products">
    <event type="alternative splicing"/>
    <isoform>
        <id>Q60997-1</id>
        <name>1</name>
        <name>CPR-ductin alpha</name>
        <sequence type="displayed"/>
    </isoform>
    <isoform>
        <id>Q60997-2</id>
        <name>2</name>
        <name>CPR-ductin beta</name>
        <sequence type="described" ref="VSP_016853"/>
    </isoform>
    <isoform>
        <id>Q60997-3</id>
        <name>3</name>
        <sequence type="described" ref="VSP_016851 VSP_016852"/>
    </isoform>
    <isoform>
        <id>Q60997-4</id>
        <name>4</name>
        <sequence type="described" ref="VSP_016852"/>
    </isoform>
</comment>
<comment type="tissue specificity">
    <text evidence="6 9 16 19 20 21">Strongly expressed in acini and duct epithelial cells of the exocrine pancreas but not in the islets of Langerhans. Expressed in gall bladder, salivary glands and in the epithelium lining larger hepatic ducts, but not in the liver parenchyma, stomach or lung. Expressed along the intestinal tract including duodenum, jejunum, ileum and colon (at protein level). Expressed in glands associated with vomeronasal tissues. Expressed in the vomeronasal gland and posterior gland of nasal septum. Weakly expressed in lateral nasal gland. CFTR knockout mice show increased expression in pancreas, duodenum and small intestine but not in gall bladder. In pancreas and small intestine, increased expression occurs after the appearance of dilated lumina.</text>
</comment>
<comment type="developmental stage">
    <text evidence="12 18">Present in the 3.5 dpc blastocyst. Levels increase to a maximum between 18.5 dpc and birth and decrease gradually between birth and adulthood with the greatest decreases occurring between neonate and P1 and between P9 and P16 (at protein level). Expressed in the primitive endoderm at 4.5 dpc. At 9.5 dpc, expressed in midbrain, notochord, liver primordium, midgut and hindgut.</text>
</comment>
<comment type="domain">
    <text evidence="1">The SRCR domains mediate binding to bacteria.</text>
</comment>
<comment type="PTM">
    <text evidence="17 18">Highly N- and O-glycosylated. The O-glycans are heavily sulfated. O-glycosylation and sulfation in pancreatic acinar cells are required for zymogen granule maturation. Glycoconjugate composition changes during development with fucose only acquired post-natally during weaning.</text>
</comment>
<comment type="disruption phenotype">
    <text evidence="12 14 15">Variable phenotypes have been reported. In some studies mice display normal development and viability with impaired exocrine pancreatic function and no development of gastrointestinal tumors (PubMed:17983803, PubMed:18202109). In other studies mice die between 4.5 dpc and 5.5 dpc due to defects in the differentiation of the primitive endoderm layer (PubMed:15452149).</text>
</comment>
<comment type="similarity">
    <text evidence="25">Belongs to the DMBT1 family.</text>
</comment>
<comment type="sequence caution" evidence="25">
    <conflict type="frameshift">
        <sequence resource="EMBL-CDS" id="AAC52505"/>
    </conflict>
</comment>
<feature type="signal peptide" evidence="2">
    <location>
        <begin position="1"/>
        <end position="19"/>
    </location>
</feature>
<feature type="chain" id="PRO_0000045388" description="Scavenger receptor cysteine-rich domain-containing protein DMBT1">
    <location>
        <begin position="20"/>
        <end position="2085"/>
    </location>
</feature>
<feature type="transmembrane region" description="Helical" evidence="2">
    <location>
        <begin position="2050"/>
        <end position="2070"/>
    </location>
</feature>
<feature type="domain" description="SRCR 1" evidence="4">
    <location>
        <begin position="37"/>
        <end position="137"/>
    </location>
</feature>
<feature type="domain" description="SRCR 2" evidence="4">
    <location>
        <begin position="186"/>
        <end position="286"/>
    </location>
</feature>
<feature type="domain" description="SRCR 3" evidence="4">
    <location>
        <begin position="324"/>
        <end position="424"/>
    </location>
</feature>
<feature type="domain" description="SRCR 4" evidence="4">
    <location>
        <begin position="463"/>
        <end position="563"/>
    </location>
</feature>
<feature type="domain" description="SRCR 5" evidence="4">
    <location>
        <begin position="602"/>
        <end position="702"/>
    </location>
</feature>
<feature type="domain" description="SRCR 6" evidence="4">
    <location>
        <begin position="741"/>
        <end position="841"/>
    </location>
</feature>
<feature type="domain" description="SRCR 7" evidence="4">
    <location>
        <begin position="880"/>
        <end position="980"/>
    </location>
</feature>
<feature type="domain" description="CUB 1" evidence="3">
    <location>
        <begin position="1023"/>
        <end position="1132"/>
    </location>
</feature>
<feature type="domain" description="CUB 2" evidence="3">
    <location>
        <begin position="1139"/>
        <end position="1248"/>
    </location>
</feature>
<feature type="domain" description="CUB 3" evidence="3">
    <location>
        <begin position="1265"/>
        <end position="1374"/>
    </location>
</feature>
<feature type="domain" description="CUB 4" evidence="3">
    <location>
        <begin position="1381"/>
        <end position="1490"/>
    </location>
</feature>
<feature type="domain" description="SRCR 8" evidence="4">
    <location>
        <begin position="1510"/>
        <end position="1610"/>
    </location>
</feature>
<feature type="domain" description="CUB 5" evidence="3">
    <location>
        <begin position="1633"/>
        <end position="1742"/>
    </location>
</feature>
<feature type="domain" description="ZP" evidence="5">
    <location>
        <begin position="1751"/>
        <end position="1999"/>
    </location>
</feature>
<feature type="modified residue" description="Phosphothreonine" evidence="10">
    <location>
        <position position="2073"/>
    </location>
</feature>
<feature type="modified residue" description="Phosphoserine" evidence="10">
    <location>
        <position position="2082"/>
    </location>
</feature>
<feature type="glycosylation site" description="N-linked (GlcNAc...) asparagine" evidence="2">
    <location>
        <position position="1088"/>
    </location>
</feature>
<feature type="glycosylation site" description="N-linked (GlcNAc...) asparagine" evidence="2">
    <location>
        <position position="1100"/>
    </location>
</feature>
<feature type="glycosylation site" description="N-linked (GlcNAc...) asparagine" evidence="2">
    <location>
        <position position="1136"/>
    </location>
</feature>
<feature type="glycosylation site" description="N-linked (GlcNAc...) asparagine" evidence="2">
    <location>
        <position position="1204"/>
    </location>
</feature>
<feature type="glycosylation site" description="N-linked (GlcNAc...) asparagine" evidence="2">
    <location>
        <position position="1216"/>
    </location>
</feature>
<feature type="glycosylation site" description="N-linked (GlcNAc...) asparagine" evidence="2">
    <location>
        <position position="1330"/>
    </location>
</feature>
<feature type="glycosylation site" description="N-linked (GlcNAc...) asparagine" evidence="2">
    <location>
        <position position="1342"/>
    </location>
</feature>
<feature type="glycosylation site" description="N-linked (GlcNAc...) asparagine" evidence="2">
    <location>
        <position position="1378"/>
    </location>
</feature>
<feature type="glycosylation site" description="N-linked (GlcNAc...) asparagine" evidence="2">
    <location>
        <position position="1446"/>
    </location>
</feature>
<feature type="glycosylation site" description="N-linked (GlcNAc...) asparagine" evidence="2">
    <location>
        <position position="1458"/>
    </location>
</feature>
<feature type="glycosylation site" description="N-linked (GlcNAc...) asparagine" evidence="2">
    <location>
        <position position="1500"/>
    </location>
</feature>
<feature type="glycosylation site" description="N-linked (GlcNAc...) asparagine" evidence="2">
    <location>
        <position position="1504"/>
    </location>
</feature>
<feature type="glycosylation site" description="N-linked (GlcNAc...) asparagine" evidence="2">
    <location>
        <position position="1514"/>
    </location>
</feature>
<feature type="glycosylation site" description="N-linked (GlcNAc...) asparagine" evidence="2">
    <location>
        <position position="1630"/>
    </location>
</feature>
<feature type="glycosylation site" description="N-linked (GlcNAc...) asparagine" evidence="2">
    <location>
        <position position="1745"/>
    </location>
</feature>
<feature type="glycosylation site" description="N-linked (GlcNAc...) asparagine" evidence="2">
    <location>
        <position position="1746"/>
    </location>
</feature>
<feature type="glycosylation site" description="N-linked (GlcNAc...) asparagine" evidence="2">
    <location>
        <position position="1782"/>
    </location>
</feature>
<feature type="glycosylation site" description="N-linked (GlcNAc...) asparagine" evidence="2">
    <location>
        <position position="1813"/>
    </location>
</feature>
<feature type="glycosylation site" description="N-linked (GlcNAc...) asparagine" evidence="2">
    <location>
        <position position="1817"/>
    </location>
</feature>
<feature type="glycosylation site" description="N-linked (GlcNAc...) asparagine" evidence="2">
    <location>
        <position position="1858"/>
    </location>
</feature>
<feature type="glycosylation site" description="N-linked (GlcNAc...) asparagine" evidence="2">
    <location>
        <position position="1874"/>
    </location>
</feature>
<feature type="disulfide bond" evidence="1">
    <location>
        <begin position="62"/>
        <end position="126"/>
    </location>
</feature>
<feature type="disulfide bond" evidence="1">
    <location>
        <begin position="75"/>
        <end position="136"/>
    </location>
</feature>
<feature type="disulfide bond" evidence="1">
    <location>
        <begin position="106"/>
        <end position="116"/>
    </location>
</feature>
<feature type="disulfide bond" evidence="1">
    <location>
        <begin position="211"/>
        <end position="275"/>
    </location>
</feature>
<feature type="disulfide bond" evidence="1">
    <location>
        <begin position="224"/>
        <end position="285"/>
    </location>
</feature>
<feature type="disulfide bond" evidence="1">
    <location>
        <begin position="255"/>
        <end position="265"/>
    </location>
</feature>
<feature type="disulfide bond" evidence="1">
    <location>
        <begin position="349"/>
        <end position="413"/>
    </location>
</feature>
<feature type="disulfide bond" evidence="1">
    <location>
        <begin position="362"/>
        <end position="423"/>
    </location>
</feature>
<feature type="disulfide bond" evidence="1">
    <location>
        <begin position="393"/>
        <end position="403"/>
    </location>
</feature>
<feature type="disulfide bond" evidence="1">
    <location>
        <begin position="488"/>
        <end position="552"/>
    </location>
</feature>
<feature type="disulfide bond" evidence="1">
    <location>
        <begin position="501"/>
        <end position="562"/>
    </location>
</feature>
<feature type="disulfide bond" evidence="1">
    <location>
        <begin position="532"/>
        <end position="542"/>
    </location>
</feature>
<feature type="disulfide bond" evidence="1">
    <location>
        <begin position="627"/>
        <end position="691"/>
    </location>
</feature>
<feature type="disulfide bond" evidence="1">
    <location>
        <begin position="640"/>
        <end position="701"/>
    </location>
</feature>
<feature type="disulfide bond" evidence="1">
    <location>
        <begin position="671"/>
        <end position="681"/>
    </location>
</feature>
<feature type="disulfide bond" evidence="1">
    <location>
        <begin position="766"/>
        <end position="830"/>
    </location>
</feature>
<feature type="disulfide bond" evidence="1">
    <location>
        <begin position="779"/>
        <end position="840"/>
    </location>
</feature>
<feature type="disulfide bond" evidence="1">
    <location>
        <begin position="810"/>
        <end position="820"/>
    </location>
</feature>
<feature type="disulfide bond" evidence="1">
    <location>
        <begin position="905"/>
        <end position="969"/>
    </location>
</feature>
<feature type="disulfide bond" evidence="1">
    <location>
        <begin position="918"/>
        <end position="979"/>
    </location>
</feature>
<feature type="disulfide bond" evidence="1">
    <location>
        <begin position="949"/>
        <end position="959"/>
    </location>
</feature>
<feature type="disulfide bond" evidence="1">
    <location>
        <begin position="1023"/>
        <end position="1049"/>
    </location>
</feature>
<feature type="disulfide bond" evidence="1">
    <location>
        <begin position="1074"/>
        <end position="1096"/>
    </location>
</feature>
<feature type="disulfide bond" evidence="1">
    <location>
        <begin position="1139"/>
        <end position="1165"/>
    </location>
</feature>
<feature type="disulfide bond" evidence="1">
    <location>
        <begin position="1190"/>
        <end position="1212"/>
    </location>
</feature>
<feature type="disulfide bond" evidence="1">
    <location>
        <begin position="1265"/>
        <end position="1291"/>
    </location>
</feature>
<feature type="disulfide bond" evidence="1">
    <location>
        <begin position="1316"/>
        <end position="1338"/>
    </location>
</feature>
<feature type="disulfide bond" evidence="1">
    <location>
        <begin position="1381"/>
        <end position="1407"/>
    </location>
</feature>
<feature type="disulfide bond" evidence="1">
    <location>
        <begin position="1432"/>
        <end position="1454"/>
    </location>
</feature>
<feature type="disulfide bond" evidence="1">
    <location>
        <begin position="1535"/>
        <end position="1599"/>
    </location>
</feature>
<feature type="disulfide bond" evidence="1">
    <location>
        <begin position="1548"/>
        <end position="1609"/>
    </location>
</feature>
<feature type="disulfide bond" evidence="1">
    <location>
        <begin position="1579"/>
        <end position="1589"/>
    </location>
</feature>
<feature type="disulfide bond" evidence="1">
    <location>
        <begin position="1633"/>
        <end position="1659"/>
    </location>
</feature>
<feature type="disulfide bond" evidence="1">
    <location>
        <begin position="1684"/>
        <end position="1706"/>
    </location>
</feature>
<feature type="disulfide bond" evidence="1">
    <location>
        <begin position="1920"/>
        <end position="1978"/>
    </location>
</feature>
<feature type="splice variant" id="VSP_016851" description="In isoform 3." evidence="22">
    <original>D</original>
    <variation>DEVSYTAEQSTE</variation>
    <location>
        <position position="29"/>
    </location>
</feature>
<feature type="splice variant" id="VSP_016852" description="In isoform 3 and isoform 4." evidence="22 23">
    <location>
        <begin position="397"/>
        <end position="534"/>
    </location>
</feature>
<feature type="splice variant" id="VSP_016853" description="In isoform 2." evidence="24">
    <location>
        <begin position="2032"/>
        <end position="2085"/>
    </location>
</feature>
<feature type="mutagenesis site" description="Abolishes phosphorylation." evidence="10">
    <original>T</original>
    <variation>A</variation>
    <location>
        <position position="2073"/>
    </location>
</feature>
<feature type="mutagenesis site" description="Abolishes phosphorylation." evidence="10">
    <original>S</original>
    <variation>A</variation>
    <location>
        <position position="2082"/>
    </location>
</feature>
<feature type="sequence conflict" description="In Ref. 1; AAC52505." evidence="25" ref="1">
    <original>PI</original>
    <variation>L</variation>
    <location>
        <begin position="247"/>
        <end position="248"/>
    </location>
</feature>
<feature type="sequence conflict" description="In Ref. 1; AAC52505." evidence="25" ref="1">
    <original>PPSF</original>
    <variation>SLH</variation>
    <location>
        <begin position="1494"/>
        <end position="1497"/>
    </location>
</feature>
<feature type="sequence conflict" description="In Ref. 2; BAA92266." evidence="25" ref="2">
    <original>V</original>
    <variation>G</variation>
    <location>
        <position position="2061"/>
    </location>
</feature>
<evidence type="ECO:0000250" key="1"/>
<evidence type="ECO:0000255" key="2"/>
<evidence type="ECO:0000255" key="3">
    <source>
        <dbReference type="PROSITE-ProRule" id="PRU00059"/>
    </source>
</evidence>
<evidence type="ECO:0000255" key="4">
    <source>
        <dbReference type="PROSITE-ProRule" id="PRU00196"/>
    </source>
</evidence>
<evidence type="ECO:0000255" key="5">
    <source>
        <dbReference type="PROSITE-ProRule" id="PRU00375"/>
    </source>
</evidence>
<evidence type="ECO:0000269" key="6">
    <source>
    </source>
</evidence>
<evidence type="ECO:0000269" key="7">
    <source>
    </source>
</evidence>
<evidence type="ECO:0000269" key="8">
    <source>
    </source>
</evidence>
<evidence type="ECO:0000269" key="9">
    <source>
    </source>
</evidence>
<evidence type="ECO:0000269" key="10">
    <source>
    </source>
</evidence>
<evidence type="ECO:0000269" key="11">
    <source>
    </source>
</evidence>
<evidence type="ECO:0000269" key="12">
    <source>
    </source>
</evidence>
<evidence type="ECO:0000269" key="13">
    <source>
    </source>
</evidence>
<evidence type="ECO:0000269" key="14">
    <source>
    </source>
</evidence>
<evidence type="ECO:0000269" key="15">
    <source>
    </source>
</evidence>
<evidence type="ECO:0000269" key="16">
    <source>
    </source>
</evidence>
<evidence type="ECO:0000269" key="17">
    <source>
    </source>
</evidence>
<evidence type="ECO:0000269" key="18">
    <source>
    </source>
</evidence>
<evidence type="ECO:0000269" key="19">
    <source>
    </source>
</evidence>
<evidence type="ECO:0000269" key="20">
    <source>
    </source>
</evidence>
<evidence type="ECO:0000269" key="21">
    <source>
    </source>
</evidence>
<evidence type="ECO:0000303" key="22">
    <source>
    </source>
</evidence>
<evidence type="ECO:0000303" key="23">
    <source>
    </source>
</evidence>
<evidence type="ECO:0000303" key="24">
    <source>
    </source>
</evidence>
<evidence type="ECO:0000305" key="25"/>
<sequence length="2085" mass="226815">MGISTVIFEICLLWGQILSTASQTAVPTDGTDSGLAVRLVNGGDRCQGRVEILYQGSWGTVCDDSWDLNDANVVCRQLGCGLAVSAPGNARFGQGSGPIVMDDVACGGYEDYLWRCSHRGWLSHNCGHQEDAGVICSDSQTSSPTPGWWNPGGTNNDVFYPTEQTTAEQTTIPDYTPIGTDSGLAVRLVNGGDRCQGRVEILYQGSWGTVCDDSWDVSDANVVCRQLGCGWAVSAPGNAYFGQGQGPIVLDDVACGGYENYLWSCSHQGWLSHNCGHQEDAGVICSASQSSSPTPGWWNPGGTNNDVFYPTEQTTAGTDSGLAVRLVNGGDRCQGRVEILYQGSWGTVCDDSWDTNDANVVCRQLGCGWAVSAPGNAYFGPGSGSIVLDDVACTGHEDYLWRCSHRGWLSHNCGHHEDAGVICSASQSSSPTPDVFYPTDQTTAEQTTVPDYTPIGTDSGLAVRLVNGGDRCQGRVEILYQGSWGTVCDDSWDLNDANVVCRQLGCGLAVSAPGSARFGQGTGPIVMDDVACGGYEDYLWRCSHRGWLSHNCGHHEDAGVICSASQSSSPTPDVFYPTDQTTAEQTTVPDYTPIGTDSGLAVRLVNGGDRCQGRVEILYQGSWGTVCDDSWDLNDANVVCRQLGCGLAVSAPGSARFGQGTGPIVMDDVACGGYEDYLWRCSHRGWLSHNCGHHEDAGVICSASQSSSPTPDVFYPTDQTTAEQTTVPDYTTIGTENSLAVRLENGGDRCQGRVEILYQGSWGTVCDDSWDLNDANVVCRQLGCGLAVSAPGSARFGQGTGPIVMDDVACGGYEDYLWRCSHRGWLSHNCGHHEDAGVICSASQSSSPTPDVFYPTDQTTVEQTTVPDYTPIGTENSLAVRLENGGDRCQGRVEILYQGSWGTVCDDSWDTKDANVVCRQLGCGWAVSAPGNAYFGPGSGSIVLDDVACTGHEDYLWSCSHRGWLSHNCGHHEDAGVICSDAQIQSTTRPDLWPTTTTPETTTELLTTTPYFDWWTTTSDYSCGGLLTQPSGQFSSPYYPSNYPNNARCSWKIVLPNMNRVTVVFTDVQLEGGCNYDYILVYDGPEYNSSLIARVCDGSNGSFTSTGNFMSVVFITDGSVTRRGFQAHYYSTVSTNYSCGGLLTQPSGQFSSPYYPSNYPNNARCSWEILVPNMNRVTVVFTDVQLEGGCNYDYILVYDGPQYNSSLIARVCDGSNGSFTSTGNFMSVVFITDGSVTRRGFQAHYYSTVSTTPPVPIPTTDDYSCGGLLTLPSGQFSSPHYPSNYPNNARCSWEILVPNMNRVTVAFTDVQLEGGCNYDYILVYDGPEYNSSLIARVCDGSNGSFTSTGNFMSVVFITDGSVTRRGFQAHYYSTVSTNYSCGGLLTQPSGQFSSPHYPSNYPNNVRCSWEILVPSMNRVTVAFTDVQLEGGCSFDYILVYDGPEYNSSLIAPVCDGFNGSFTSTGNFMSVVFITDGSVTRRGFQAYYYSTVSTPPSFHPNITGNDSSLALRLVNGSNRCEGRVEILYRGSWGTVCDDSWGISDANVVCRQLGCGSALSAPGNAWFGQGSGLIVLDDVSCSGYESHLWNCHHPGWLVHNCRHSEDAGVICALPEVTSPSPGWWTTSPSYVNYTCGGFLTQPSGQFSSPFYPGNYPNNARCLWNIEVPNNYRVTVVFRDLQLERGCSYDYIEIFDGPHHSSPLIARVCDGSLGSFTSTSNFMSIRFITDHSITARGFQAHYYSDFDNNTTNLLCQSNHMQASVSRSYLQSMGYSARDLVIPGWNSSYHCQPQITQREVIFTIPYTGCGTIKQADNETINYSNFLRAVVSNGIIKRRKDLNIHVSCKMLQNTWVNTMYITNNTVEIQEVQYGNFDVNISFYTSSSFLFPVTSSPYYVDLDQNLYLQAEILHSDASLALFVDTCVASPHPNDFSSLTYDLIRSGCVRDDTYQSYSSPSPRVSRFKFSSFHFLNRFPSVYLQCKLVVCRAYDTSSRCYRGCVVRSKRDVGSYQEKVDVVLGPIQLQSPSKEKRSLDLAVEDVKKPASSQAVYPTAAIFGGVFLAMVLAVAAFTLGRRTHIDRGQPPSTKL</sequence>
<protein>
    <recommendedName>
        <fullName evidence="25">Scavenger receptor cysteine-rich domain-containing protein DMBT1</fullName>
    </recommendedName>
    <alternativeName>
        <fullName>Apactin</fullName>
    </alternativeName>
    <alternativeName>
        <fullName>CRP-ductin</fullName>
    </alternativeName>
    <alternativeName>
        <fullName>Deleted in malignant brain tumors 1 protein</fullName>
    </alternativeName>
    <alternativeName>
        <fullName>Glycoprotein 300</fullName>
        <shortName>gp300</shortName>
    </alternativeName>
    <alternativeName>
        <fullName>Hensin</fullName>
    </alternativeName>
    <alternativeName>
        <fullName>Mucin-like glycoprotein</fullName>
        <shortName>Muclin</shortName>
    </alternativeName>
    <alternativeName>
        <fullName>Vomeroglandin</fullName>
    </alternativeName>
    <alternativeName>
        <fullName>p80</fullName>
    </alternativeName>
</protein>
<proteinExistence type="evidence at protein level"/>
<organism>
    <name type="scientific">Mus musculus</name>
    <name type="common">Mouse</name>
    <dbReference type="NCBI Taxonomy" id="10090"/>
    <lineage>
        <taxon>Eukaryota</taxon>
        <taxon>Metazoa</taxon>
        <taxon>Chordata</taxon>
        <taxon>Craniata</taxon>
        <taxon>Vertebrata</taxon>
        <taxon>Euteleostomi</taxon>
        <taxon>Mammalia</taxon>
        <taxon>Eutheria</taxon>
        <taxon>Euarchontoglires</taxon>
        <taxon>Glires</taxon>
        <taxon>Rodentia</taxon>
        <taxon>Myomorpha</taxon>
        <taxon>Muroidea</taxon>
        <taxon>Muridae</taxon>
        <taxon>Murinae</taxon>
        <taxon>Mus</taxon>
        <taxon>Mus</taxon>
    </lineage>
</organism>
<keyword id="KW-0025">Alternative splicing</keyword>
<keyword id="KW-0968">Cytoplasmic vesicle</keyword>
<keyword id="KW-0217">Developmental protein</keyword>
<keyword id="KW-0221">Differentiation</keyword>
<keyword id="KW-0903">Direct protein sequencing</keyword>
<keyword id="KW-1015">Disulfide bond</keyword>
<keyword id="KW-0325">Glycoprotein</keyword>
<keyword id="KW-0472">Membrane</keyword>
<keyword id="KW-0597">Phosphoprotein</keyword>
<keyword id="KW-0653">Protein transport</keyword>
<keyword id="KW-1185">Reference proteome</keyword>
<keyword id="KW-0677">Repeat</keyword>
<keyword id="KW-0964">Secreted</keyword>
<keyword id="KW-0732">Signal</keyword>
<keyword id="KW-0812">Transmembrane</keyword>
<keyword id="KW-1133">Transmembrane helix</keyword>
<keyword id="KW-0813">Transport</keyword>
<name>DMBT1_MOUSE</name>
<gene>
    <name type="primary">Dmbt1</name>
    <name type="synonym">Crpd</name>
</gene>
<reference key="1">
    <citation type="journal article" date="1996" name="Anat. Rec.">
        <title>CRP-ductin: a gene expressed in intestinal crypts and in pancreatic and hepatic ducts.</title>
        <authorList>
            <person name="Cheng H."/>
            <person name="Bjerknes M."/>
            <person name="Chen H."/>
        </authorList>
    </citation>
    <scope>NUCLEOTIDE SEQUENCE [MRNA] (ISOFORMS 1 AND 2)</scope>
    <scope>FUNCTION IN EPITHELIAL DIFFERENTIATION</scope>
    <scope>ALTERNATIVE SPLICING</scope>
    <scope>TISSUE SPECIFICITY</scope>
    <scope>SUBCELLULAR LOCATION</scope>
    <source>
        <strain>BALB/cJ</strain>
        <tissue>Jejunal epithelium</tissue>
    </source>
</reference>
<reference key="2">
    <citation type="journal article" date="2000" name="Biochem. Biophys. Res. Commun.">
        <title>Vomeroglandin/CRP-ductin is strongly expressed in the glands associated with the mouse vomeronasal organ: identification and characterization of mouse vomeroglandin.</title>
        <authorList>
            <person name="Matsushita F."/>
            <person name="Miyawaki A."/>
            <person name="Mikoshiba K."/>
        </authorList>
    </citation>
    <scope>NUCLEOTIDE SEQUENCE [MRNA] (ISOFORM 3)</scope>
    <scope>PROTEIN SEQUENCE OF 22-40 AND 1942-1957</scope>
    <scope>TISSUE SPECIFICITY</scope>
    <source>
        <strain>ddY</strain>
    </source>
</reference>
<reference key="3">
    <citation type="journal article" date="2004" name="Genome Res.">
        <title>The status, quality, and expansion of the NIH full-length cDNA project: the Mammalian Gene Collection (MGC).</title>
        <authorList>
            <consortium name="The MGC Project Team"/>
        </authorList>
    </citation>
    <scope>NUCLEOTIDE SEQUENCE [LARGE SCALE MRNA] (ISOFORM 4)</scope>
    <source>
        <strain>FVB/N</strain>
        <tissue>Colon</tissue>
    </source>
</reference>
<reference key="4">
    <citation type="journal article" date="1994" name="J. Cell. Biochem.">
        <title>Characterization of the major sulfated protein of mouse pancreatic acinar cells: a high molecular weight peripheral membrane glycoprotein of zymogen granules.</title>
        <authorList>
            <person name="De Lisle R.C."/>
        </authorList>
    </citation>
    <scope>SUBCELLULAR LOCATION</scope>
    <scope>GLYCOSYLATION</scope>
</reference>
<reference key="5">
    <citation type="journal article" date="1995" name="Am. J. Physiol.">
        <title>Increased expression of sulfated gp300 and acinar tissue pathology in pancreas of CFTR(-/-) mice.</title>
        <authorList>
            <person name="De Lisle R.C."/>
        </authorList>
    </citation>
    <scope>TISSUE SPECIFICITY</scope>
</reference>
<reference key="6">
    <citation type="journal article" date="1996" name="J. Histochem. Cytochem.">
        <title>Expression of sulfated gp300 and changes in glycosylation during pancreatic development.</title>
        <authorList>
            <person name="De Lisle R.C."/>
            <person name="Isom K.S."/>
        </authorList>
    </citation>
    <scope>DEVELOPMENTAL STAGE</scope>
    <scope>GLYCOSYLATION</scope>
</reference>
<reference key="7">
    <citation type="journal article" date="1997" name="Gastroenterology">
        <title>Muclin expression in the cystic fibrosis transmembrane conductance regulator knockout mouse.</title>
        <authorList>
            <person name="De Lisle R.C."/>
            <person name="Petitt M."/>
            <person name="Huff J."/>
            <person name="Isom K.S."/>
            <person name="Agbas A."/>
        </authorList>
    </citation>
    <scope>SUBCELLULAR LOCATION</scope>
    <scope>TISSUE SPECIFICITY</scope>
</reference>
<reference key="8">
    <citation type="journal article" date="1998" name="Am. J. Physiol.">
        <title>Developmental expression of a mucinlike glycoprotein (MUCLIN) in pancreas and small intestine of CF mice.</title>
        <authorList>
            <person name="De Lisle R.C."/>
            <person name="Petitt M."/>
            <person name="Isom K.S."/>
            <person name="Ziemer D."/>
        </authorList>
    </citation>
    <scope>TISSUE SPECIFICITY</scope>
</reference>
<reference key="9">
    <citation type="journal article" date="2000" name="Eur. J. Cell Biol.">
        <title>Processing of pro-muclin and divergent trafficking of its products to zymogen granules and the apical plasma membrane of pancreatic acinar cells.</title>
        <authorList>
            <person name="De Lisle R.C."/>
            <person name="Ziemer D."/>
        </authorList>
    </citation>
    <scope>FUNCTION</scope>
    <scope>SUBCELLULAR LOCATION</scope>
</reference>
<reference key="10">
    <citation type="journal article" date="2002" name="J. Cell Sci.">
        <title>Role of sulfated O-linked glycoproteins in zymogen granule formation.</title>
        <authorList>
            <person name="De Lisle R.C."/>
        </authorList>
    </citation>
    <scope>FUNCTION</scope>
</reference>
<reference key="11">
    <citation type="journal article" date="2003" name="Eur. J. Immunol.">
        <title>CRP-ductin, the mouse homologue of gp-340/deleted in malignant brain tumors 1 (DMBT1), binds gram-positive and gram-negative bacteria and interacts with lung surfactant protein D.</title>
        <authorList>
            <person name="Madsen J."/>
            <person name="Tornoee I."/>
            <person name="Nielsen O."/>
            <person name="Lausen M."/>
            <person name="Krebs I."/>
            <person name="Mollenhauer J."/>
            <person name="Kollender G."/>
            <person name="Poustka A."/>
            <person name="Skjodt K."/>
            <person name="Holmskov U."/>
        </authorList>
    </citation>
    <scope>FUNCTION</scope>
    <scope>INTERACTION WITH SFTPD</scope>
    <scope>TISSUE SPECIFICITY</scope>
</reference>
<reference key="12">
    <citation type="journal article" date="2004" name="Eur. J. Cell Biol.">
        <title>Apactin is involved in remodeling of the actin cytoskeleton during regulated exocytosis.</title>
        <authorList>
            <person name="Tandon C."/>
            <person name="De Lisle R.C."/>
        </authorList>
    </citation>
    <scope>FUNCTION</scope>
    <scope>PHOSPHORYLATION AT THR-2073 AND SER-2082</scope>
    <scope>MUTAGENESIS OF THR-2073 AND SER-2082</scope>
</reference>
<reference key="13">
    <citation type="journal article" date="2004" name="J. Biol. Chem.">
        <title>Binding of the Golgi sorting receptor muclin to pancreatic zymogens through sulfated O-linked oligosaccharides.</title>
        <authorList>
            <person name="Boulatnikov I."/>
            <person name="De Lisle R.C."/>
        </authorList>
    </citation>
    <scope>FUNCTION</scope>
</reference>
<reference key="14">
    <citation type="journal article" date="2004" name="J. Cell Biol.">
        <title>Conversion of ES cells to columnar epithelia by hensin and to squamous epithelia by laminin.</title>
        <authorList>
            <person name="Takito J."/>
            <person name="Al-Awqati Q."/>
        </authorList>
    </citation>
    <scope>DISRUPTION PHENOTYPE</scope>
    <scope>FUNCTION</scope>
    <scope>DEVELOPMENTAL STAGE</scope>
</reference>
<reference key="15">
    <citation type="journal article" date="2005" name="Am. J. Physiol.">
        <title>Expression of pro-muclin in pancreatic AR42J cells induces functional regulated secretory granules.</title>
        <authorList>
            <person name="De Lisle R.C."/>
            <person name="Norkina O."/>
            <person name="Roach E."/>
            <person name="Ziemer D."/>
        </authorList>
    </citation>
    <scope>FUNCTION</scope>
</reference>
<reference key="16">
    <citation type="journal article" date="2007" name="Gastroenterology">
        <title>DMBT1 confers mucosal protection in vivo and a deletion variant is associated with Crohn's disease.</title>
        <authorList>
            <person name="Renner M."/>
            <person name="Bergmann G."/>
            <person name="Krebs I."/>
            <person name="End C."/>
            <person name="Lyer S."/>
            <person name="Hilberg F."/>
            <person name="Helmke B."/>
            <person name="Gassler N."/>
            <person name="Autschbach F."/>
            <person name="Bikker F."/>
            <person name="Strobel-Freidekind O."/>
            <person name="Gronert-Sum S."/>
            <person name="Benner A."/>
            <person name="Blaich S."/>
            <person name="Wittig R."/>
            <person name="Hudler M."/>
            <person name="Ligtenberg A.J."/>
            <person name="Madsen J."/>
            <person name="Holmskov U."/>
            <person name="Annese V."/>
            <person name="Latiano A."/>
            <person name="Schirmacher P."/>
            <person name="Amerongen A.V.N."/>
            <person name="D'Amato M."/>
            <person name="Kioschis P."/>
            <person name="Hafner M."/>
            <person name="Poustka A."/>
            <person name="Mollenhauer J."/>
        </authorList>
    </citation>
    <scope>DISRUPTION PHENOTYPE</scope>
</reference>
<reference key="17">
    <citation type="journal article" date="2008" name="Am. J. Physiol.">
        <title>Effects of muclin (Dmbt1) deficiency on the gastrointestinal system.</title>
        <authorList>
            <person name="De Lisle R.C."/>
            <person name="Xu W."/>
            <person name="Roe B.A."/>
            <person name="Ziemer D."/>
        </authorList>
    </citation>
    <scope>DISRUPTION PHENOTYPE</scope>
</reference>
<reference key="18">
    <citation type="journal article" date="2010" name="Cell">
        <title>A tissue-specific atlas of mouse protein phosphorylation and expression.</title>
        <authorList>
            <person name="Huttlin E.L."/>
            <person name="Jedrychowski M.P."/>
            <person name="Elias J.E."/>
            <person name="Goswami T."/>
            <person name="Rad R."/>
            <person name="Beausoleil S.A."/>
            <person name="Villen J."/>
            <person name="Haas W."/>
            <person name="Sowa M.E."/>
            <person name="Gygi S.P."/>
        </authorList>
    </citation>
    <scope>IDENTIFICATION BY MASS SPECTROMETRY [LARGE SCALE ANALYSIS]</scope>
    <source>
        <tissue>Pancreas</tissue>
        <tissue>Spleen</tissue>
    </source>
</reference>
<accession>Q60997</accession>
<accession>Q80YC6</accession>
<accession>Q9JMJ9</accession>
<dbReference type="EMBL" id="U37438">
    <property type="protein sequence ID" value="AAC52505.1"/>
    <property type="status" value="ALT_FRAME"/>
    <property type="molecule type" value="mRNA"/>
</dbReference>
<dbReference type="EMBL" id="AB005909">
    <property type="protein sequence ID" value="BAA92266.1"/>
    <property type="molecule type" value="mRNA"/>
</dbReference>
<dbReference type="EMBL" id="BC049835">
    <property type="protein sequence ID" value="AAH49835.1"/>
    <property type="molecule type" value="mRNA"/>
</dbReference>
<dbReference type="PIR" id="T42721">
    <property type="entry name" value="T42721"/>
</dbReference>
<dbReference type="RefSeq" id="NP_001334561.1">
    <property type="nucleotide sequence ID" value="NM_001347632.1"/>
</dbReference>
<dbReference type="RefSeq" id="NP_031795.2">
    <property type="nucleotide sequence ID" value="NM_007769.2"/>
</dbReference>
<dbReference type="SMR" id="Q60997"/>
<dbReference type="BioGRID" id="198900">
    <property type="interactions" value="4"/>
</dbReference>
<dbReference type="FunCoup" id="Q60997">
    <property type="interactions" value="35"/>
</dbReference>
<dbReference type="IntAct" id="Q60997">
    <property type="interactions" value="1"/>
</dbReference>
<dbReference type="MINT" id="Q60997"/>
<dbReference type="STRING" id="10090.ENSMUSP00000146685"/>
<dbReference type="GlyCosmos" id="Q60997">
    <property type="glycosylation" value="21 sites, No reported glycans"/>
</dbReference>
<dbReference type="GlyGen" id="Q60997">
    <property type="glycosylation" value="29 sites"/>
</dbReference>
<dbReference type="iPTMnet" id="Q60997"/>
<dbReference type="PhosphoSitePlus" id="Q60997"/>
<dbReference type="PaxDb" id="10090-ENSMUSP00000081556"/>
<dbReference type="ProteomicsDB" id="277340">
    <molecule id="Q60997-1"/>
</dbReference>
<dbReference type="ProteomicsDB" id="277341">
    <molecule id="Q60997-2"/>
</dbReference>
<dbReference type="ProteomicsDB" id="277342">
    <molecule id="Q60997-3"/>
</dbReference>
<dbReference type="ProteomicsDB" id="277343">
    <molecule id="Q60997-4"/>
</dbReference>
<dbReference type="DNASU" id="12945"/>
<dbReference type="GeneID" id="12945"/>
<dbReference type="KEGG" id="mmu:12945"/>
<dbReference type="AGR" id="MGI:106210"/>
<dbReference type="CTD" id="1755"/>
<dbReference type="MGI" id="MGI:106210">
    <property type="gene designation" value="Dmbt1"/>
</dbReference>
<dbReference type="eggNOG" id="ENOG502RSDM">
    <property type="taxonomic scope" value="Eukaryota"/>
</dbReference>
<dbReference type="InParanoid" id="Q60997"/>
<dbReference type="OrthoDB" id="536948at2759"/>
<dbReference type="PhylomeDB" id="Q60997"/>
<dbReference type="Reactome" id="R-MMU-5683826">
    <property type="pathway name" value="Surfactant metabolism"/>
</dbReference>
<dbReference type="BioGRID-ORCS" id="12945">
    <property type="hits" value="4 hits in 77 CRISPR screens"/>
</dbReference>
<dbReference type="ChiTaRS" id="Dmbt1">
    <property type="organism name" value="mouse"/>
</dbReference>
<dbReference type="PRO" id="PR:Q60997"/>
<dbReference type="Proteomes" id="UP000000589">
    <property type="component" value="Unplaced"/>
</dbReference>
<dbReference type="RNAct" id="Q60997">
    <property type="molecule type" value="protein"/>
</dbReference>
<dbReference type="GO" id="GO:0062023">
    <property type="term" value="C:collagen-containing extracellular matrix"/>
    <property type="evidence" value="ECO:0007005"/>
    <property type="project" value="BHF-UCL"/>
</dbReference>
<dbReference type="GO" id="GO:0031012">
    <property type="term" value="C:extracellular matrix"/>
    <property type="evidence" value="ECO:0000314"/>
    <property type="project" value="UniProtKB"/>
</dbReference>
<dbReference type="GO" id="GO:0005576">
    <property type="term" value="C:extracellular region"/>
    <property type="evidence" value="ECO:0007669"/>
    <property type="project" value="UniProtKB-SubCell"/>
</dbReference>
<dbReference type="GO" id="GO:0030658">
    <property type="term" value="C:transport vesicle membrane"/>
    <property type="evidence" value="ECO:0007669"/>
    <property type="project" value="UniProtKB-SubCell"/>
</dbReference>
<dbReference type="GO" id="GO:0042589">
    <property type="term" value="C:zymogen granule membrane"/>
    <property type="evidence" value="ECO:0000314"/>
    <property type="project" value="UniProtKB"/>
</dbReference>
<dbReference type="GO" id="GO:0035375">
    <property type="term" value="F:zymogen binding"/>
    <property type="evidence" value="ECO:0000314"/>
    <property type="project" value="UniProtKB"/>
</dbReference>
<dbReference type="GO" id="GO:0001824">
    <property type="term" value="P:blastocyst development"/>
    <property type="evidence" value="ECO:0000315"/>
    <property type="project" value="MGI"/>
</dbReference>
<dbReference type="GO" id="GO:0002065">
    <property type="term" value="P:columnar/cuboidal epithelial cell differentiation"/>
    <property type="evidence" value="ECO:0000314"/>
    <property type="project" value="MGI"/>
</dbReference>
<dbReference type="GO" id="GO:0050829">
    <property type="term" value="P:defense response to Gram-negative bacterium"/>
    <property type="evidence" value="ECO:0000314"/>
    <property type="project" value="UniProtKB"/>
</dbReference>
<dbReference type="GO" id="GO:0050830">
    <property type="term" value="P:defense response to Gram-positive bacterium"/>
    <property type="evidence" value="ECO:0000314"/>
    <property type="project" value="UniProtKB"/>
</dbReference>
<dbReference type="GO" id="GO:0001833">
    <property type="term" value="P:inner cell mass cell proliferation"/>
    <property type="evidence" value="ECO:0000314"/>
    <property type="project" value="MGI"/>
</dbReference>
<dbReference type="GO" id="GO:0030858">
    <property type="term" value="P:positive regulation of epithelial cell differentiation"/>
    <property type="evidence" value="ECO:0000314"/>
    <property type="project" value="MGI"/>
</dbReference>
<dbReference type="GO" id="GO:0015031">
    <property type="term" value="P:protein transport"/>
    <property type="evidence" value="ECO:0007669"/>
    <property type="project" value="UniProtKB-KW"/>
</dbReference>
<dbReference type="GO" id="GO:0009617">
    <property type="term" value="P:response to bacterium"/>
    <property type="evidence" value="ECO:0000270"/>
    <property type="project" value="MGI"/>
</dbReference>
<dbReference type="CDD" id="cd00041">
    <property type="entry name" value="CUB"/>
    <property type="match status" value="5"/>
</dbReference>
<dbReference type="FunFam" id="2.60.40.3210:FF:000005">
    <property type="entry name" value="Deleted in malignant brain tumors 1"/>
    <property type="match status" value="1"/>
</dbReference>
<dbReference type="FunFam" id="2.60.40.4100:FF:000005">
    <property type="entry name" value="Deleted in malignant brain tumors 1"/>
    <property type="match status" value="1"/>
</dbReference>
<dbReference type="FunFam" id="3.10.250.10:FF:000003">
    <property type="entry name" value="Deleted in malignant brain tumors 1"/>
    <property type="match status" value="8"/>
</dbReference>
<dbReference type="FunFam" id="2.60.120.290:FF:000013">
    <property type="entry name" value="Membrane frizzled-related protein"/>
    <property type="match status" value="1"/>
</dbReference>
<dbReference type="FunFam" id="2.60.120.290:FF:000004">
    <property type="entry name" value="Metalloendopeptidase"/>
    <property type="match status" value="4"/>
</dbReference>
<dbReference type="Gene3D" id="2.60.120.290">
    <property type="entry name" value="Spermadhesin, CUB domain"/>
    <property type="match status" value="5"/>
</dbReference>
<dbReference type="Gene3D" id="3.10.250.10">
    <property type="entry name" value="SRCR-like domain"/>
    <property type="match status" value="8"/>
</dbReference>
<dbReference type="Gene3D" id="2.60.40.4100">
    <property type="entry name" value="Zona pellucida, ZP-C domain"/>
    <property type="match status" value="1"/>
</dbReference>
<dbReference type="Gene3D" id="2.60.40.3210">
    <property type="entry name" value="Zona pellucida, ZP-N domain"/>
    <property type="match status" value="1"/>
</dbReference>
<dbReference type="InterPro" id="IPR000859">
    <property type="entry name" value="CUB_dom"/>
</dbReference>
<dbReference type="InterPro" id="IPR053243">
    <property type="entry name" value="SJ_maturation_regulator"/>
</dbReference>
<dbReference type="InterPro" id="IPR035914">
    <property type="entry name" value="Sperma_CUB_dom_sf"/>
</dbReference>
<dbReference type="InterPro" id="IPR001190">
    <property type="entry name" value="SRCR"/>
</dbReference>
<dbReference type="InterPro" id="IPR036772">
    <property type="entry name" value="SRCR-like_dom_sf"/>
</dbReference>
<dbReference type="InterPro" id="IPR055355">
    <property type="entry name" value="ZP-C"/>
</dbReference>
<dbReference type="InterPro" id="IPR042235">
    <property type="entry name" value="ZP-C_dom"/>
</dbReference>
<dbReference type="InterPro" id="IPR055356">
    <property type="entry name" value="ZP-N"/>
</dbReference>
<dbReference type="InterPro" id="IPR001507">
    <property type="entry name" value="ZP_dom"/>
</dbReference>
<dbReference type="InterPro" id="IPR017977">
    <property type="entry name" value="ZP_dom_CS"/>
</dbReference>
<dbReference type="PANTHER" id="PTHR47653:SF1">
    <property type="entry name" value="DELETED IN MALIGNANT BRAIN TUMORS 1 PROTEIN"/>
    <property type="match status" value="1"/>
</dbReference>
<dbReference type="PANTHER" id="PTHR47653">
    <property type="entry name" value="PROTEIN BARK BEETLE"/>
    <property type="match status" value="1"/>
</dbReference>
<dbReference type="Pfam" id="PF00431">
    <property type="entry name" value="CUB"/>
    <property type="match status" value="5"/>
</dbReference>
<dbReference type="Pfam" id="PF00530">
    <property type="entry name" value="SRCR"/>
    <property type="match status" value="8"/>
</dbReference>
<dbReference type="Pfam" id="PF00100">
    <property type="entry name" value="Zona_pellucida"/>
    <property type="match status" value="1"/>
</dbReference>
<dbReference type="Pfam" id="PF23344">
    <property type="entry name" value="ZP-N"/>
    <property type="match status" value="1"/>
</dbReference>
<dbReference type="PRINTS" id="PR00258">
    <property type="entry name" value="SPERACTRCPTR"/>
</dbReference>
<dbReference type="SMART" id="SM00042">
    <property type="entry name" value="CUB"/>
    <property type="match status" value="5"/>
</dbReference>
<dbReference type="SMART" id="SM00202">
    <property type="entry name" value="SR"/>
    <property type="match status" value="8"/>
</dbReference>
<dbReference type="SMART" id="SM00241">
    <property type="entry name" value="ZP"/>
    <property type="match status" value="1"/>
</dbReference>
<dbReference type="SUPFAM" id="SSF49854">
    <property type="entry name" value="Spermadhesin, CUB domain"/>
    <property type="match status" value="5"/>
</dbReference>
<dbReference type="SUPFAM" id="SSF56487">
    <property type="entry name" value="SRCR-like"/>
    <property type="match status" value="8"/>
</dbReference>
<dbReference type="PROSITE" id="PS01180">
    <property type="entry name" value="CUB"/>
    <property type="match status" value="5"/>
</dbReference>
<dbReference type="PROSITE" id="PS00420">
    <property type="entry name" value="SRCR_1"/>
    <property type="match status" value="8"/>
</dbReference>
<dbReference type="PROSITE" id="PS50287">
    <property type="entry name" value="SRCR_2"/>
    <property type="match status" value="8"/>
</dbReference>
<dbReference type="PROSITE" id="PS00682">
    <property type="entry name" value="ZP_1"/>
    <property type="match status" value="1"/>
</dbReference>
<dbReference type="PROSITE" id="PS51034">
    <property type="entry name" value="ZP_2"/>
    <property type="match status" value="1"/>
</dbReference>